<accession>P60134</accession>
<accession>P29301</accession>
<organism>
    <name type="scientific">Gunnera chilensis</name>
    <name type="common">Chilean rhubarb</name>
    <dbReference type="NCBI Taxonomy" id="130722"/>
    <lineage>
        <taxon>Eukaryota</taxon>
        <taxon>Viridiplantae</taxon>
        <taxon>Streptophyta</taxon>
        <taxon>Embryophyta</taxon>
        <taxon>Tracheophyta</taxon>
        <taxon>Spermatophyta</taxon>
        <taxon>Magnoliopsida</taxon>
        <taxon>eudicotyledons</taxon>
        <taxon>Gunneridae</taxon>
        <taxon>Gunnerales</taxon>
        <taxon>Gunneraceae</taxon>
        <taxon>Gunnera</taxon>
    </lineage>
</organism>
<name>PSBL_GUNCH</name>
<geneLocation type="chloroplast"/>
<feature type="chain" id="PRO_0000219718" description="Photosystem II reaction center protein L">
    <location>
        <begin position="1"/>
        <end position="38"/>
    </location>
</feature>
<feature type="transmembrane region" description="Helical" evidence="2">
    <location>
        <begin position="17"/>
        <end position="37"/>
    </location>
</feature>
<evidence type="ECO:0000250" key="1"/>
<evidence type="ECO:0000255" key="2">
    <source>
        <dbReference type="HAMAP-Rule" id="MF_01317"/>
    </source>
</evidence>
<keyword id="KW-0150">Chloroplast</keyword>
<keyword id="KW-0472">Membrane</keyword>
<keyword id="KW-0602">Photosynthesis</keyword>
<keyword id="KW-0604">Photosystem II</keyword>
<keyword id="KW-0934">Plastid</keyword>
<keyword id="KW-0674">Reaction center</keyword>
<keyword id="KW-0691">RNA editing</keyword>
<keyword id="KW-0793">Thylakoid</keyword>
<keyword id="KW-0812">Transmembrane</keyword>
<keyword id="KW-1133">Transmembrane helix</keyword>
<proteinExistence type="inferred from homology"/>
<protein>
    <recommendedName>
        <fullName evidence="2">Photosystem II reaction center protein L</fullName>
        <shortName evidence="2">PSII-L</shortName>
    </recommendedName>
</protein>
<comment type="function">
    <text evidence="2">One of the components of the core complex of photosystem II (PSII). PSII is a light-driven water:plastoquinone oxidoreductase that uses light energy to abstract electrons from H(2)O, generating O(2) and a proton gradient subsequently used for ATP formation. It consists of a core antenna complex that captures photons, and an electron transfer chain that converts photonic excitation into a charge separation. This subunit is found at the monomer-monomer interface and is required for correct PSII assembly and/or dimerization.</text>
</comment>
<comment type="subunit">
    <text evidence="2">PSII is composed of 1 copy each of membrane proteins PsbA, PsbB, PsbC, PsbD, PsbE, PsbF, PsbH, PsbI, PsbJ, PsbK, PsbL, PsbM, PsbT, PsbX, PsbY, PsbZ, Psb30/Ycf12, at least 3 peripheral proteins of the oxygen-evolving complex and a large number of cofactors. It forms dimeric complexes.</text>
</comment>
<comment type="subcellular location">
    <subcellularLocation>
        <location evidence="2">Plastid</location>
        <location evidence="2">Chloroplast thylakoid membrane</location>
        <topology evidence="2">Single-pass membrane protein</topology>
    </subcellularLocation>
</comment>
<comment type="RNA editing">
    <location>
        <position position="1" evidence="1"/>
    </location>
    <text evidence="1">The initiator methionine is created by RNA editing.</text>
</comment>
<comment type="similarity">
    <text evidence="2">Belongs to the PsbL family.</text>
</comment>
<dbReference type="EMBL" id="AY007478">
    <property type="protein sequence ID" value="AAG26996.1"/>
    <property type="molecule type" value="Genomic_DNA"/>
</dbReference>
<dbReference type="SMR" id="P60134"/>
<dbReference type="GO" id="GO:0009535">
    <property type="term" value="C:chloroplast thylakoid membrane"/>
    <property type="evidence" value="ECO:0007669"/>
    <property type="project" value="UniProtKB-SubCell"/>
</dbReference>
<dbReference type="GO" id="GO:0009539">
    <property type="term" value="C:photosystem II reaction center"/>
    <property type="evidence" value="ECO:0007669"/>
    <property type="project" value="InterPro"/>
</dbReference>
<dbReference type="GO" id="GO:0015979">
    <property type="term" value="P:photosynthesis"/>
    <property type="evidence" value="ECO:0007669"/>
    <property type="project" value="UniProtKB-UniRule"/>
</dbReference>
<dbReference type="HAMAP" id="MF_01317">
    <property type="entry name" value="PSII_PsbL"/>
    <property type="match status" value="1"/>
</dbReference>
<dbReference type="InterPro" id="IPR003372">
    <property type="entry name" value="PSII_PsbL"/>
</dbReference>
<dbReference type="InterPro" id="IPR037266">
    <property type="entry name" value="PSII_PsbL_sf"/>
</dbReference>
<dbReference type="NCBIfam" id="NF001972">
    <property type="entry name" value="PRK00753.1"/>
    <property type="match status" value="1"/>
</dbReference>
<dbReference type="Pfam" id="PF02419">
    <property type="entry name" value="PsbL"/>
    <property type="match status" value="1"/>
</dbReference>
<dbReference type="SUPFAM" id="SSF161017">
    <property type="entry name" value="Photosystem II reaction center protein L, PsbL"/>
    <property type="match status" value="1"/>
</dbReference>
<gene>
    <name evidence="2" type="primary">psbL</name>
</gene>
<sequence length="38" mass="4470">MTQSNPNEQSVELNRTSLYWGLLLIFVLAVLFSNYFFN</sequence>
<reference key="1">
    <citation type="submission" date="2000-02" db="EMBL/GenBank/DDBJ databases">
        <title>Long branches in the seed plants and the root of the angiosperms.</title>
        <authorList>
            <person name="Graham S.W."/>
            <person name="Reeves P.A."/>
            <person name="Burns A."/>
            <person name="Olmstead R.G."/>
        </authorList>
    </citation>
    <scope>NUCLEOTIDE SEQUENCE [GENOMIC DNA]</scope>
</reference>